<sequence>EPPPWVPV</sequence>
<reference evidence="3" key="1">
    <citation type="submission" date="2009-04" db="UniProtKB">
        <title>Identification of peptides from Phyllomedusa burmesteri skin secretomics by nano LC MS/MS.</title>
        <authorList>
            <person name="Conceicao K."/>
            <person name="Klitzke C.F."/>
            <person name="Brito R.C."/>
            <person name="Andrade D.F."/>
            <person name="Junca F.A."/>
            <person name="Biondi I."/>
            <person name="Lopes-Ferreira M."/>
        </authorList>
    </citation>
    <scope>PROTEIN SEQUENCE</scope>
    <scope>SUBCELLULAR LOCATION</scope>
    <scope>TISSUE SPECIFICITY</scope>
    <scope>MASS SPECTROMETRY</scope>
    <source>
        <tissue evidence="1">Parotoid gland secretion</tissue>
    </source>
</reference>
<comment type="subcellular location">
    <subcellularLocation>
        <location evidence="1">Secreted</location>
    </subcellularLocation>
</comment>
<comment type="tissue specificity">
    <text evidence="1">Expressed by the parotoid glands.</text>
</comment>
<comment type="mass spectrometry"/>
<keyword id="KW-0903">Direct protein sequencing</keyword>
<keyword id="KW-0964">Secreted</keyword>
<accession>P86286</accession>
<protein>
    <recommendedName>
        <fullName evidence="2">Tryptophyllin-like peptide PbT-1</fullName>
    </recommendedName>
</protein>
<name>TY01_PHYBU</name>
<proteinExistence type="evidence at protein level"/>
<dbReference type="GO" id="GO:0005576">
    <property type="term" value="C:extracellular region"/>
    <property type="evidence" value="ECO:0007669"/>
    <property type="project" value="UniProtKB-SubCell"/>
</dbReference>
<organism>
    <name type="scientific">Phyllomedusa burmeisteri</name>
    <name type="common">Brazilian common walking leaf frog</name>
    <dbReference type="NCBI Taxonomy" id="39413"/>
    <lineage>
        <taxon>Eukaryota</taxon>
        <taxon>Metazoa</taxon>
        <taxon>Chordata</taxon>
        <taxon>Craniata</taxon>
        <taxon>Vertebrata</taxon>
        <taxon>Euteleostomi</taxon>
        <taxon>Amphibia</taxon>
        <taxon>Batrachia</taxon>
        <taxon>Anura</taxon>
        <taxon>Neobatrachia</taxon>
        <taxon>Hyloidea</taxon>
        <taxon>Hylidae</taxon>
        <taxon>Phyllomedusinae</taxon>
        <taxon>Phyllomedusa</taxon>
    </lineage>
</organism>
<feature type="peptide" id="PRO_0000378912" description="Tryptophyllin-like peptide PbT-1" evidence="1">
    <location>
        <begin position="1"/>
        <end position="8"/>
    </location>
</feature>
<evidence type="ECO:0000269" key="1">
    <source ref="1"/>
</evidence>
<evidence type="ECO:0000303" key="2">
    <source ref="1"/>
</evidence>
<evidence type="ECO:0000305" key="3"/>